<sequence length="244" mass="26970">MPKNTLHIKNIDIQTTHIMLKTDINCDIKPFIQNQREIILNEIKENPNFLKSYTPIPLIDKKPILKLMTKAGEIANTGPMAAVAGSISEMCLDYLESFKSKFSIVENGGDIALKTNKKINMGIYAGKTSFSYNYGFKIKPKPYKYGICTSSYDGPSKSFGSTDATIVFSKQSSIADSLATSIGNYGNGNTENEVVHNALSYAEKYSDYYEGVLVIKGETLGKTGHIPQLISINNTHVKEAFEIE</sequence>
<gene>
    <name type="ordered locus">Msp_1322</name>
</gene>
<organism>
    <name type="scientific">Methanosphaera stadtmanae (strain ATCC 43021 / DSM 3091 / JCM 11832 / MCB-3)</name>
    <dbReference type="NCBI Taxonomy" id="339860"/>
    <lineage>
        <taxon>Archaea</taxon>
        <taxon>Methanobacteriati</taxon>
        <taxon>Methanobacteriota</taxon>
        <taxon>Methanomada group</taxon>
        <taxon>Methanobacteria</taxon>
        <taxon>Methanobacteriales</taxon>
        <taxon>Methanobacteriaceae</taxon>
        <taxon>Methanosphaera</taxon>
    </lineage>
</organism>
<evidence type="ECO:0000255" key="1">
    <source>
        <dbReference type="HAMAP-Rule" id="MF_01079"/>
    </source>
</evidence>
<proteinExistence type="inferred from homology"/>
<accession>Q2NEQ4</accession>
<protein>
    <recommendedName>
        <fullName evidence="1">UPF0280 protein Msp_1322</fullName>
    </recommendedName>
</protein>
<comment type="similarity">
    <text evidence="1">Belongs to the UPF0280 family.</text>
</comment>
<dbReference type="EMBL" id="CP000102">
    <property type="protein sequence ID" value="ABC57699.1"/>
    <property type="molecule type" value="Genomic_DNA"/>
</dbReference>
<dbReference type="RefSeq" id="WP_011406898.1">
    <property type="nucleotide sequence ID" value="NC_007681.1"/>
</dbReference>
<dbReference type="SMR" id="Q2NEQ4"/>
<dbReference type="STRING" id="339860.Msp_1322"/>
<dbReference type="KEGG" id="mst:Msp_1322"/>
<dbReference type="eggNOG" id="arCOG04376">
    <property type="taxonomic scope" value="Archaea"/>
</dbReference>
<dbReference type="HOGENOM" id="CLU_074757_0_0_2"/>
<dbReference type="OrthoDB" id="50299at2157"/>
<dbReference type="Proteomes" id="UP000001931">
    <property type="component" value="Chromosome"/>
</dbReference>
<dbReference type="Gene3D" id="3.10.520.10">
    <property type="entry name" value="ApbE-like domains"/>
    <property type="match status" value="1"/>
</dbReference>
<dbReference type="HAMAP" id="MF_01079">
    <property type="entry name" value="UPF0280"/>
    <property type="match status" value="1"/>
</dbReference>
<dbReference type="InterPro" id="IPR003374">
    <property type="entry name" value="ApbE-like_sf"/>
</dbReference>
<dbReference type="InterPro" id="IPR037456">
    <property type="entry name" value="MA1715-like"/>
</dbReference>
<dbReference type="InterPro" id="IPR007183">
    <property type="entry name" value="UPF0280"/>
</dbReference>
<dbReference type="NCBIfam" id="NF003321">
    <property type="entry name" value="PRK04334.1-1"/>
    <property type="match status" value="1"/>
</dbReference>
<dbReference type="PIRSF" id="PIRSF006421">
    <property type="entry name" value="UCP006421"/>
    <property type="match status" value="1"/>
</dbReference>
<dbReference type="SUPFAM" id="SSF143631">
    <property type="entry name" value="ApbE-like"/>
    <property type="match status" value="1"/>
</dbReference>
<feature type="chain" id="PRO_0000366711" description="UPF0280 protein Msp_1322">
    <location>
        <begin position="1"/>
        <end position="244"/>
    </location>
</feature>
<keyword id="KW-1185">Reference proteome</keyword>
<name>Y1322_METST</name>
<reference key="1">
    <citation type="journal article" date="2006" name="J. Bacteriol.">
        <title>The genome sequence of Methanosphaera stadtmanae reveals why this human intestinal archaeon is restricted to methanol and H2 for methane formation and ATP synthesis.</title>
        <authorList>
            <person name="Fricke W.F."/>
            <person name="Seedorf H."/>
            <person name="Henne A."/>
            <person name="Kruer M."/>
            <person name="Liesegang H."/>
            <person name="Hedderich R."/>
            <person name="Gottschalk G."/>
            <person name="Thauer R.K."/>
        </authorList>
    </citation>
    <scope>NUCLEOTIDE SEQUENCE [LARGE SCALE GENOMIC DNA]</scope>
    <source>
        <strain>ATCC 43021 / DSM 3091 / JCM 11832 / MCB-3</strain>
    </source>
</reference>